<organism>
    <name type="scientific">Pseudomonas aeruginosa (strain ATCC 15692 / DSM 22644 / CIP 104116 / JCM 14847 / LMG 12228 / 1C / PRS 101 / PAO1)</name>
    <dbReference type="NCBI Taxonomy" id="208964"/>
    <lineage>
        <taxon>Bacteria</taxon>
        <taxon>Pseudomonadati</taxon>
        <taxon>Pseudomonadota</taxon>
        <taxon>Gammaproteobacteria</taxon>
        <taxon>Pseudomonadales</taxon>
        <taxon>Pseudomonadaceae</taxon>
        <taxon>Pseudomonas</taxon>
    </lineage>
</organism>
<proteinExistence type="inferred from homology"/>
<protein>
    <recommendedName>
        <fullName evidence="1">Ferrochelatase</fullName>
        <ecNumber evidence="1">4.98.1.1</ecNumber>
    </recommendedName>
    <alternativeName>
        <fullName evidence="1">Heme synthase</fullName>
    </alternativeName>
    <alternativeName>
        <fullName evidence="1">Protoheme ferro-lyase</fullName>
    </alternativeName>
</protein>
<dbReference type="EC" id="4.98.1.1" evidence="1"/>
<dbReference type="EMBL" id="AE004091">
    <property type="protein sequence ID" value="AAG08042.1"/>
    <property type="molecule type" value="Genomic_DNA"/>
</dbReference>
<dbReference type="PIR" id="G83064">
    <property type="entry name" value="G83064"/>
</dbReference>
<dbReference type="RefSeq" id="NP_253344.1">
    <property type="nucleotide sequence ID" value="NC_002516.2"/>
</dbReference>
<dbReference type="RefSeq" id="WP_003099324.1">
    <property type="nucleotide sequence ID" value="NZ_QZGE01000029.1"/>
</dbReference>
<dbReference type="SMR" id="Q9HVD7"/>
<dbReference type="FunCoup" id="Q9HVD7">
    <property type="interactions" value="647"/>
</dbReference>
<dbReference type="STRING" id="208964.PA4655"/>
<dbReference type="PaxDb" id="208964-PA4655"/>
<dbReference type="DNASU" id="881311"/>
<dbReference type="GeneID" id="881311"/>
<dbReference type="KEGG" id="pae:PA4655"/>
<dbReference type="PATRIC" id="fig|208964.12.peg.4877"/>
<dbReference type="PseudoCAP" id="PA4655"/>
<dbReference type="HOGENOM" id="CLU_018884_0_1_6"/>
<dbReference type="InParanoid" id="Q9HVD7"/>
<dbReference type="OrthoDB" id="9809741at2"/>
<dbReference type="PhylomeDB" id="Q9HVD7"/>
<dbReference type="BioCyc" id="PAER208964:G1FZ6-4751-MONOMER"/>
<dbReference type="UniPathway" id="UPA00252">
    <property type="reaction ID" value="UER00325"/>
</dbReference>
<dbReference type="Proteomes" id="UP000002438">
    <property type="component" value="Chromosome"/>
</dbReference>
<dbReference type="GO" id="GO:0005737">
    <property type="term" value="C:cytoplasm"/>
    <property type="evidence" value="ECO:0007669"/>
    <property type="project" value="UniProtKB-SubCell"/>
</dbReference>
<dbReference type="GO" id="GO:0004325">
    <property type="term" value="F:ferrochelatase activity"/>
    <property type="evidence" value="ECO:0000318"/>
    <property type="project" value="GO_Central"/>
</dbReference>
<dbReference type="GO" id="GO:0046872">
    <property type="term" value="F:metal ion binding"/>
    <property type="evidence" value="ECO:0007669"/>
    <property type="project" value="UniProtKB-KW"/>
</dbReference>
<dbReference type="GO" id="GO:0006783">
    <property type="term" value="P:heme biosynthetic process"/>
    <property type="evidence" value="ECO:0000318"/>
    <property type="project" value="GO_Central"/>
</dbReference>
<dbReference type="CDD" id="cd00419">
    <property type="entry name" value="Ferrochelatase_C"/>
    <property type="match status" value="1"/>
</dbReference>
<dbReference type="CDD" id="cd03411">
    <property type="entry name" value="Ferrochelatase_N"/>
    <property type="match status" value="1"/>
</dbReference>
<dbReference type="FunFam" id="3.40.50.1400:FF:000012">
    <property type="entry name" value="Ferrochelatase"/>
    <property type="match status" value="1"/>
</dbReference>
<dbReference type="Gene3D" id="3.40.50.1400">
    <property type="match status" value="2"/>
</dbReference>
<dbReference type="HAMAP" id="MF_00323">
    <property type="entry name" value="Ferrochelatase"/>
    <property type="match status" value="1"/>
</dbReference>
<dbReference type="InterPro" id="IPR001015">
    <property type="entry name" value="Ferrochelatase"/>
</dbReference>
<dbReference type="InterPro" id="IPR033644">
    <property type="entry name" value="Ferrochelatase_C"/>
</dbReference>
<dbReference type="InterPro" id="IPR033659">
    <property type="entry name" value="Ferrochelatase_N"/>
</dbReference>
<dbReference type="NCBIfam" id="TIGR00109">
    <property type="entry name" value="hemH"/>
    <property type="match status" value="1"/>
</dbReference>
<dbReference type="PANTHER" id="PTHR11108">
    <property type="entry name" value="FERROCHELATASE"/>
    <property type="match status" value="1"/>
</dbReference>
<dbReference type="PANTHER" id="PTHR11108:SF1">
    <property type="entry name" value="FERROCHELATASE, MITOCHONDRIAL"/>
    <property type="match status" value="1"/>
</dbReference>
<dbReference type="Pfam" id="PF00762">
    <property type="entry name" value="Ferrochelatase"/>
    <property type="match status" value="1"/>
</dbReference>
<dbReference type="SUPFAM" id="SSF53800">
    <property type="entry name" value="Chelatase"/>
    <property type="match status" value="1"/>
</dbReference>
<name>HEMH_PSEAE</name>
<reference key="1">
    <citation type="journal article" date="2000" name="Nature">
        <title>Complete genome sequence of Pseudomonas aeruginosa PAO1, an opportunistic pathogen.</title>
        <authorList>
            <person name="Stover C.K."/>
            <person name="Pham X.-Q.T."/>
            <person name="Erwin A.L."/>
            <person name="Mizoguchi S.D."/>
            <person name="Warrener P."/>
            <person name="Hickey M.J."/>
            <person name="Brinkman F.S.L."/>
            <person name="Hufnagle W.O."/>
            <person name="Kowalik D.J."/>
            <person name="Lagrou M."/>
            <person name="Garber R.L."/>
            <person name="Goltry L."/>
            <person name="Tolentino E."/>
            <person name="Westbrock-Wadman S."/>
            <person name="Yuan Y."/>
            <person name="Brody L.L."/>
            <person name="Coulter S.N."/>
            <person name="Folger K.R."/>
            <person name="Kas A."/>
            <person name="Larbig K."/>
            <person name="Lim R.M."/>
            <person name="Smith K.A."/>
            <person name="Spencer D.H."/>
            <person name="Wong G.K.-S."/>
            <person name="Wu Z."/>
            <person name="Paulsen I.T."/>
            <person name="Reizer J."/>
            <person name="Saier M.H. Jr."/>
            <person name="Hancock R.E.W."/>
            <person name="Lory S."/>
            <person name="Olson M.V."/>
        </authorList>
    </citation>
    <scope>NUCLEOTIDE SEQUENCE [LARGE SCALE GENOMIC DNA]</scope>
    <source>
        <strain>ATCC 15692 / DSM 22644 / CIP 104116 / JCM 14847 / LMG 12228 / 1C / PRS 101 / PAO1</strain>
    </source>
</reference>
<feature type="chain" id="PRO_0000175183" description="Ferrochelatase">
    <location>
        <begin position="1"/>
        <end position="340"/>
    </location>
</feature>
<feature type="binding site" evidence="1">
    <location>
        <position position="189"/>
    </location>
    <ligand>
        <name>Fe cation</name>
        <dbReference type="ChEBI" id="CHEBI:24875"/>
    </ligand>
</feature>
<feature type="binding site" evidence="1">
    <location>
        <position position="292"/>
    </location>
    <ligand>
        <name>Fe cation</name>
        <dbReference type="ChEBI" id="CHEBI:24875"/>
    </ligand>
</feature>
<evidence type="ECO:0000255" key="1">
    <source>
        <dbReference type="HAMAP-Rule" id="MF_00323"/>
    </source>
</evidence>
<evidence type="ECO:0000305" key="2"/>
<sequence>MTENALLLLNLGSPDSTRVEDVRRYLDQFLMDPYVVDLPWPLRRLLVSLILIKRPAESAHAYSSIWWDEGSPLIVLSRRLQEAMKPHWPHGPVELAMRYGQPAIEKVLLDLARRGIRRVTLAPLYPQFADSTTTTAEQEVRRVIAAHRLGLEVSTLPPFYDQPVYLDALVESVRPYLQQPHDHLLLSFHGLPERHIRKLVKDPAHDLLAENSRNVSPEALALCYRSQCLRTAEAFAERAGLEQGRWSVSFQSRLGRAKWIEPYTDAKLDELVQRGVKRLLVMCPAFVADCIETLEEIGMRGREQFISAGGEDLVLIPCLNDHPAWVGALAEMSGRLARPL</sequence>
<accession>Q9HVD7</accession>
<comment type="function">
    <text evidence="1">Catalyzes the ferrous insertion into protoporphyrin IX.</text>
</comment>
<comment type="catalytic activity">
    <reaction evidence="1">
        <text>heme b + 2 H(+) = protoporphyrin IX + Fe(2+)</text>
        <dbReference type="Rhea" id="RHEA:22584"/>
        <dbReference type="ChEBI" id="CHEBI:15378"/>
        <dbReference type="ChEBI" id="CHEBI:29033"/>
        <dbReference type="ChEBI" id="CHEBI:57306"/>
        <dbReference type="ChEBI" id="CHEBI:60344"/>
        <dbReference type="EC" id="4.98.1.1"/>
    </reaction>
</comment>
<comment type="pathway">
    <text evidence="1">Porphyrin-containing compound metabolism; protoheme biosynthesis; protoheme from protoporphyrin-IX: step 1/1.</text>
</comment>
<comment type="subcellular location">
    <subcellularLocation>
        <location evidence="1">Cytoplasm</location>
    </subcellularLocation>
</comment>
<comment type="similarity">
    <text evidence="1 2">Belongs to the ferrochelatase family.</text>
</comment>
<keyword id="KW-0963">Cytoplasm</keyword>
<keyword id="KW-0350">Heme biosynthesis</keyword>
<keyword id="KW-0408">Iron</keyword>
<keyword id="KW-0456">Lyase</keyword>
<keyword id="KW-0479">Metal-binding</keyword>
<keyword id="KW-0627">Porphyrin biosynthesis</keyword>
<keyword id="KW-1185">Reference proteome</keyword>
<gene>
    <name evidence="1" type="primary">hemH</name>
    <name type="ordered locus">PA4655</name>
</gene>